<protein>
    <recommendedName>
        <fullName>Cytochrome b</fullName>
    </recommendedName>
    <alternativeName>
        <fullName>Complex III subunit 3</fullName>
    </alternativeName>
    <alternativeName>
        <fullName>Complex III subunit III</fullName>
    </alternativeName>
    <alternativeName>
        <fullName>Cytochrome b-c1 complex subunit 3</fullName>
    </alternativeName>
    <alternativeName>
        <fullName>Ubiquinol-cytochrome-c reductase complex cytochrome b subunit</fullName>
    </alternativeName>
</protein>
<comment type="function">
    <text evidence="2">Component of the ubiquinol-cytochrome c reductase complex (complex III or cytochrome b-c1 complex) that is part of the mitochondrial respiratory chain. The b-c1 complex mediates electron transfer from ubiquinol to cytochrome c. Contributes to the generation of a proton gradient across the mitochondrial membrane that is then used for ATP synthesis.</text>
</comment>
<comment type="cofactor">
    <cofactor evidence="2">
        <name>heme</name>
        <dbReference type="ChEBI" id="CHEBI:30413"/>
    </cofactor>
    <text evidence="2">Binds 2 heme groups non-covalently.</text>
</comment>
<comment type="subunit">
    <text evidence="2">The cytochrome bc1 complex contains 11 subunits: 3 respiratory subunits (MT-CYB, CYC1 and UQCRFS1), 2 core proteins (UQCRC1 and UQCRC2) and 6 low-molecular weight proteins (UQCRH/QCR6, UQCRB/QCR7, UQCRQ/QCR8, UQCR10/QCR9, UQCR11/QCR10 and a cleavage product of UQCRFS1). This cytochrome bc1 complex then forms a dimer.</text>
</comment>
<comment type="subcellular location">
    <subcellularLocation>
        <location evidence="2">Mitochondrion inner membrane</location>
        <topology evidence="2">Multi-pass membrane protein</topology>
    </subcellularLocation>
</comment>
<comment type="miscellaneous">
    <text evidence="1">Heme 1 (or BL or b562) is low-potential and absorbs at about 562 nm, and heme 2 (or BH or b566) is high-potential and absorbs at about 566 nm.</text>
</comment>
<comment type="similarity">
    <text evidence="3">Belongs to the cytochrome b family.</text>
</comment>
<comment type="caution">
    <text evidence="2">The full-length protein contains only eight transmembrane helices, not nine as predicted by bioinformatics tools.</text>
</comment>
<organism>
    <name type="scientific">Cervus nippon pseudaxis</name>
    <name type="common">Vietnamese sika deer</name>
    <dbReference type="NCBI Taxonomy" id="92868"/>
    <lineage>
        <taxon>Eukaryota</taxon>
        <taxon>Metazoa</taxon>
        <taxon>Chordata</taxon>
        <taxon>Craniata</taxon>
        <taxon>Vertebrata</taxon>
        <taxon>Euteleostomi</taxon>
        <taxon>Mammalia</taxon>
        <taxon>Eutheria</taxon>
        <taxon>Laurasiatheria</taxon>
        <taxon>Artiodactyla</taxon>
        <taxon>Ruminantia</taxon>
        <taxon>Pecora</taxon>
        <taxon>Cervidae</taxon>
        <taxon>Cervinae</taxon>
        <taxon>Cervus</taxon>
    </lineage>
</organism>
<dbReference type="EMBL" id="AF129415">
    <property type="protein sequence ID" value="AAD31812.1"/>
    <property type="molecule type" value="Genomic_DNA"/>
</dbReference>
<dbReference type="SMR" id="P82046"/>
<dbReference type="GO" id="GO:0005743">
    <property type="term" value="C:mitochondrial inner membrane"/>
    <property type="evidence" value="ECO:0007669"/>
    <property type="project" value="UniProtKB-SubCell"/>
</dbReference>
<dbReference type="GO" id="GO:0046872">
    <property type="term" value="F:metal ion binding"/>
    <property type="evidence" value="ECO:0007669"/>
    <property type="project" value="UniProtKB-KW"/>
</dbReference>
<dbReference type="GO" id="GO:0008121">
    <property type="term" value="F:ubiquinol-cytochrome-c reductase activity"/>
    <property type="evidence" value="ECO:0007669"/>
    <property type="project" value="TreeGrafter"/>
</dbReference>
<dbReference type="GO" id="GO:0006122">
    <property type="term" value="P:mitochondrial electron transport, ubiquinol to cytochrome c"/>
    <property type="evidence" value="ECO:0007669"/>
    <property type="project" value="TreeGrafter"/>
</dbReference>
<dbReference type="CDD" id="cd00290">
    <property type="entry name" value="cytochrome_b_C"/>
    <property type="match status" value="1"/>
</dbReference>
<dbReference type="Gene3D" id="1.20.810.10">
    <property type="entry name" value="Cytochrome Bc1 Complex, Chain C"/>
    <property type="match status" value="1"/>
</dbReference>
<dbReference type="InterPro" id="IPR005798">
    <property type="entry name" value="Cyt_b/b6_C"/>
</dbReference>
<dbReference type="InterPro" id="IPR036150">
    <property type="entry name" value="Cyt_b/b6_C_sf"/>
</dbReference>
<dbReference type="InterPro" id="IPR027387">
    <property type="entry name" value="Cytb/b6-like_sf"/>
</dbReference>
<dbReference type="InterPro" id="IPR048260">
    <property type="entry name" value="Cytochrome_b_C_euk/bac"/>
</dbReference>
<dbReference type="PANTHER" id="PTHR19271">
    <property type="entry name" value="CYTOCHROME B"/>
    <property type="match status" value="1"/>
</dbReference>
<dbReference type="PANTHER" id="PTHR19271:SF16">
    <property type="entry name" value="CYTOCHROME B"/>
    <property type="match status" value="1"/>
</dbReference>
<dbReference type="Pfam" id="PF00032">
    <property type="entry name" value="Cytochrom_B_C"/>
    <property type="match status" value="1"/>
</dbReference>
<dbReference type="SUPFAM" id="SSF81648">
    <property type="entry name" value="a domain/subunit of cytochrome bc1 complex (Ubiquinol-cytochrome c reductase)"/>
    <property type="match status" value="1"/>
</dbReference>
<dbReference type="PROSITE" id="PS51003">
    <property type="entry name" value="CYTB_CTER"/>
    <property type="match status" value="1"/>
</dbReference>
<keyword id="KW-0249">Electron transport</keyword>
<keyword id="KW-0349">Heme</keyword>
<keyword id="KW-0408">Iron</keyword>
<keyword id="KW-0472">Membrane</keyword>
<keyword id="KW-0479">Metal-binding</keyword>
<keyword id="KW-0496">Mitochondrion</keyword>
<keyword id="KW-0999">Mitochondrion inner membrane</keyword>
<keyword id="KW-0679">Respiratory chain</keyword>
<keyword id="KW-0812">Transmembrane</keyword>
<keyword id="KW-1133">Transmembrane helix</keyword>
<keyword id="KW-0813">Transport</keyword>
<keyword id="KW-0830">Ubiquinone</keyword>
<evidence type="ECO:0000250" key="1"/>
<evidence type="ECO:0000250" key="2">
    <source>
        <dbReference type="UniProtKB" id="P00157"/>
    </source>
</evidence>
<evidence type="ECO:0000255" key="3">
    <source>
        <dbReference type="PROSITE-ProRule" id="PRU00967"/>
    </source>
</evidence>
<accession>P82046</accession>
<feature type="chain" id="PRO_0000060764" description="Cytochrome b">
    <location>
        <begin position="1" status="less than"/>
        <end position="154"/>
    </location>
</feature>
<feature type="transmembrane region" description="Helical" evidence="2">
    <location>
        <begin position="1"/>
        <end position="21"/>
    </location>
</feature>
<feature type="transmembrane region" description="Helical" evidence="2">
    <location>
        <begin position="63"/>
        <end position="83"/>
    </location>
</feature>
<feature type="transmembrane region" description="Helical" evidence="2">
    <location>
        <begin position="95"/>
        <end position="115"/>
    </location>
</feature>
<feature type="transmembrane region" description="Helical" evidence="2">
    <location>
        <begin position="122"/>
        <end position="142"/>
    </location>
</feature>
<feature type="non-terminal residue">
    <location>
        <position position="1"/>
    </location>
</feature>
<gene>
    <name type="primary">MT-CYB</name>
    <name type="synonym">COB</name>
    <name type="synonym">CYTB</name>
    <name type="synonym">MTCYB</name>
</gene>
<reference key="1">
    <citation type="journal article" date="1999" name="Mol. Phylogenet. Evol.">
        <title>A mitochondrial control region and cytochrome b phylogeny of sika deer (Cervus nippon) and report of tandem repeats in the control region.</title>
        <authorList>
            <person name="Cook C.E."/>
            <person name="Wang Y."/>
            <person name="Sensabaugh G."/>
        </authorList>
    </citation>
    <scope>NUCLEOTIDE SEQUENCE [GENOMIC DNA]</scope>
</reference>
<proteinExistence type="inferred from homology"/>
<geneLocation type="mitochondrion"/>
<sequence length="154" mass="17547">IKDILGILLLMLFLMLLVLFAPDLLGDPDNYTPANPLNTPPHIKPEWYFLFAYAILRSIPNKLGGVLALVSSILILILMPFLHTSKQRSMMFRPFSQCLFWILVADLLTLTWIGGQPVEYPFIIIGQLASVLYFFIILVLMPITSTIENNLLKW</sequence>
<name>CYB_CERNP</name>